<evidence type="ECO:0000250" key="1"/>
<evidence type="ECO:0000255" key="2"/>
<evidence type="ECO:0000256" key="3">
    <source>
        <dbReference type="SAM" id="MobiDB-lite"/>
    </source>
</evidence>
<evidence type="ECO:0000305" key="4"/>
<reference key="1">
    <citation type="journal article" date="2005" name="Nature">
        <title>Sequencing of Aspergillus nidulans and comparative analysis with A. fumigatus and A. oryzae.</title>
        <authorList>
            <person name="Galagan J.E."/>
            <person name="Calvo S.E."/>
            <person name="Cuomo C."/>
            <person name="Ma L.-J."/>
            <person name="Wortman J.R."/>
            <person name="Batzoglou S."/>
            <person name="Lee S.-I."/>
            <person name="Bastuerkmen M."/>
            <person name="Spevak C.C."/>
            <person name="Clutterbuck J."/>
            <person name="Kapitonov V."/>
            <person name="Jurka J."/>
            <person name="Scazzocchio C."/>
            <person name="Farman M.L."/>
            <person name="Butler J."/>
            <person name="Purcell S."/>
            <person name="Harris S."/>
            <person name="Braus G.H."/>
            <person name="Draht O."/>
            <person name="Busch S."/>
            <person name="D'Enfert C."/>
            <person name="Bouchier C."/>
            <person name="Goldman G.H."/>
            <person name="Bell-Pedersen D."/>
            <person name="Griffiths-Jones S."/>
            <person name="Doonan J.H."/>
            <person name="Yu J."/>
            <person name="Vienken K."/>
            <person name="Pain A."/>
            <person name="Freitag M."/>
            <person name="Selker E.U."/>
            <person name="Archer D.B."/>
            <person name="Penalva M.A."/>
            <person name="Oakley B.R."/>
            <person name="Momany M."/>
            <person name="Tanaka T."/>
            <person name="Kumagai T."/>
            <person name="Asai K."/>
            <person name="Machida M."/>
            <person name="Nierman W.C."/>
            <person name="Denning D.W."/>
            <person name="Caddick M.X."/>
            <person name="Hynes M."/>
            <person name="Paoletti M."/>
            <person name="Fischer R."/>
            <person name="Miller B.L."/>
            <person name="Dyer P.S."/>
            <person name="Sachs M.S."/>
            <person name="Osmani S.A."/>
            <person name="Birren B.W."/>
        </authorList>
    </citation>
    <scope>NUCLEOTIDE SEQUENCE [LARGE SCALE GENOMIC DNA]</scope>
    <source>
        <strain>FGSC A4 / ATCC 38163 / CBS 112.46 / NRRL 194 / M139</strain>
    </source>
</reference>
<reference key="2">
    <citation type="journal article" date="2009" name="Fungal Genet. Biol.">
        <title>The 2008 update of the Aspergillus nidulans genome annotation: a community effort.</title>
        <authorList>
            <person name="Wortman J.R."/>
            <person name="Gilsenan J.M."/>
            <person name="Joardar V."/>
            <person name="Deegan J."/>
            <person name="Clutterbuck J."/>
            <person name="Andersen M.R."/>
            <person name="Archer D."/>
            <person name="Bencina M."/>
            <person name="Braus G."/>
            <person name="Coutinho P."/>
            <person name="von Dohren H."/>
            <person name="Doonan J."/>
            <person name="Driessen A.J."/>
            <person name="Durek P."/>
            <person name="Espeso E."/>
            <person name="Fekete E."/>
            <person name="Flipphi M."/>
            <person name="Estrada C.G."/>
            <person name="Geysens S."/>
            <person name="Goldman G."/>
            <person name="de Groot P.W."/>
            <person name="Hansen K."/>
            <person name="Harris S.D."/>
            <person name="Heinekamp T."/>
            <person name="Helmstaedt K."/>
            <person name="Henrissat B."/>
            <person name="Hofmann G."/>
            <person name="Homan T."/>
            <person name="Horio T."/>
            <person name="Horiuchi H."/>
            <person name="James S."/>
            <person name="Jones M."/>
            <person name="Karaffa L."/>
            <person name="Karanyi Z."/>
            <person name="Kato M."/>
            <person name="Keller N."/>
            <person name="Kelly D.E."/>
            <person name="Kiel J.A."/>
            <person name="Kim J.M."/>
            <person name="van der Klei I.J."/>
            <person name="Klis F.M."/>
            <person name="Kovalchuk A."/>
            <person name="Krasevec N."/>
            <person name="Kubicek C.P."/>
            <person name="Liu B."/>
            <person name="Maccabe A."/>
            <person name="Meyer V."/>
            <person name="Mirabito P."/>
            <person name="Miskei M."/>
            <person name="Mos M."/>
            <person name="Mullins J."/>
            <person name="Nelson D.R."/>
            <person name="Nielsen J."/>
            <person name="Oakley B.R."/>
            <person name="Osmani S.A."/>
            <person name="Pakula T."/>
            <person name="Paszewski A."/>
            <person name="Paulsen I."/>
            <person name="Pilsyk S."/>
            <person name="Pocsi I."/>
            <person name="Punt P.J."/>
            <person name="Ram A.F."/>
            <person name="Ren Q."/>
            <person name="Robellet X."/>
            <person name="Robson G."/>
            <person name="Seiboth B."/>
            <person name="van Solingen P."/>
            <person name="Specht T."/>
            <person name="Sun J."/>
            <person name="Taheri-Talesh N."/>
            <person name="Takeshita N."/>
            <person name="Ussery D."/>
            <person name="vanKuyk P.A."/>
            <person name="Visser H."/>
            <person name="van de Vondervoort P.J."/>
            <person name="de Vries R.P."/>
            <person name="Walton J."/>
            <person name="Xiang X."/>
            <person name="Xiong Y."/>
            <person name="Zeng A.P."/>
            <person name="Brandt B.W."/>
            <person name="Cornell M.J."/>
            <person name="van den Hondel C.A."/>
            <person name="Visser J."/>
            <person name="Oliver S.G."/>
            <person name="Turner G."/>
        </authorList>
    </citation>
    <scope>GENOME REANNOTATION</scope>
    <source>
        <strain>FGSC A4 / ATCC 38163 / CBS 112.46 / NRRL 194 / M139</strain>
    </source>
</reference>
<organism>
    <name type="scientific">Emericella nidulans (strain FGSC A4 / ATCC 38163 / CBS 112.46 / NRRL 194 / M139)</name>
    <name type="common">Aspergillus nidulans</name>
    <dbReference type="NCBI Taxonomy" id="227321"/>
    <lineage>
        <taxon>Eukaryota</taxon>
        <taxon>Fungi</taxon>
        <taxon>Dikarya</taxon>
        <taxon>Ascomycota</taxon>
        <taxon>Pezizomycotina</taxon>
        <taxon>Eurotiomycetes</taxon>
        <taxon>Eurotiomycetidae</taxon>
        <taxon>Eurotiales</taxon>
        <taxon>Aspergillaceae</taxon>
        <taxon>Aspergillus</taxon>
        <taxon>Aspergillus subgen. Nidulantes</taxon>
    </lineage>
</organism>
<feature type="chain" id="PRO_0000118981" description="Exocyst complex component exo84">
    <location>
        <begin position="1"/>
        <end position="666"/>
    </location>
</feature>
<feature type="region of interest" description="Disordered" evidence="3">
    <location>
        <begin position="1"/>
        <end position="120"/>
    </location>
</feature>
<feature type="region of interest" description="Disordered" evidence="3">
    <location>
        <begin position="203"/>
        <end position="228"/>
    </location>
</feature>
<feature type="coiled-coil region" evidence="2">
    <location>
        <begin position="133"/>
        <end position="200"/>
    </location>
</feature>
<feature type="compositionally biased region" description="Low complexity" evidence="3">
    <location>
        <begin position="36"/>
        <end position="55"/>
    </location>
</feature>
<comment type="function">
    <text evidence="1">Involved in the secretory pathway as part of the exocyst complex which tethers secretory vesicles to the sites of exocytosis. Plays a role in both the assembly of the exocyst and the polarization of this complex to specific sites of the plasma membrane for exocytosis. Also involved in assembly of the spliceosome (By similarity).</text>
</comment>
<comment type="subunit">
    <text evidence="1">Component of the exocyst complex.</text>
</comment>
<comment type="subcellular location">
    <subcellularLocation>
        <location evidence="1">Cytoplasmic vesicle</location>
        <location evidence="1">Secretory vesicle</location>
    </subcellularLocation>
    <text evidence="1">Cell periphery. The polarization of EXO84 requires actin cables (By similarity).</text>
</comment>
<comment type="similarity">
    <text evidence="4">Belongs to the EXO84 family.</text>
</comment>
<dbReference type="EMBL" id="AACD01000007">
    <property type="protein sequence ID" value="EAA66659.1"/>
    <property type="molecule type" value="Genomic_DNA"/>
</dbReference>
<dbReference type="EMBL" id="BN001308">
    <property type="protein sequence ID" value="CBF89232.1"/>
    <property type="molecule type" value="Genomic_DNA"/>
</dbReference>
<dbReference type="RefSeq" id="XP_658164.1">
    <property type="nucleotide sequence ID" value="XM_653072.1"/>
</dbReference>
<dbReference type="SMR" id="Q5BFX0"/>
<dbReference type="FunCoup" id="Q5BFX0">
    <property type="interactions" value="174"/>
</dbReference>
<dbReference type="STRING" id="227321.Q5BFX0"/>
<dbReference type="EnsemblFungi" id="CBF89232">
    <property type="protein sequence ID" value="CBF89232"/>
    <property type="gene ID" value="ANIA_00560"/>
</dbReference>
<dbReference type="KEGG" id="ani:ANIA_00560"/>
<dbReference type="eggNOG" id="KOG2215">
    <property type="taxonomic scope" value="Eukaryota"/>
</dbReference>
<dbReference type="HOGENOM" id="CLU_012488_2_0_1"/>
<dbReference type="InParanoid" id="Q5BFX0"/>
<dbReference type="OMA" id="AAWLPNR"/>
<dbReference type="OrthoDB" id="642193at2759"/>
<dbReference type="Proteomes" id="UP000000560">
    <property type="component" value="Chromosome VIII"/>
</dbReference>
<dbReference type="GO" id="GO:0000145">
    <property type="term" value="C:exocyst"/>
    <property type="evidence" value="ECO:0000318"/>
    <property type="project" value="GO_Central"/>
</dbReference>
<dbReference type="GO" id="GO:0030133">
    <property type="term" value="C:transport vesicle"/>
    <property type="evidence" value="ECO:0007669"/>
    <property type="project" value="UniProtKB-SubCell"/>
</dbReference>
<dbReference type="GO" id="GO:0006887">
    <property type="term" value="P:exocytosis"/>
    <property type="evidence" value="ECO:0007669"/>
    <property type="project" value="UniProtKB-KW"/>
</dbReference>
<dbReference type="GO" id="GO:0006893">
    <property type="term" value="P:Golgi to plasma membrane transport"/>
    <property type="evidence" value="ECO:0000318"/>
    <property type="project" value="GO_Central"/>
</dbReference>
<dbReference type="GO" id="GO:0008104">
    <property type="term" value="P:protein localization"/>
    <property type="evidence" value="ECO:0000318"/>
    <property type="project" value="GO_Central"/>
</dbReference>
<dbReference type="GO" id="GO:0015031">
    <property type="term" value="P:protein transport"/>
    <property type="evidence" value="ECO:0007669"/>
    <property type="project" value="UniProtKB-KW"/>
</dbReference>
<dbReference type="FunFam" id="1.20.58.1210:FF:000003">
    <property type="entry name" value="Exocyst complex component EXO84"/>
    <property type="match status" value="1"/>
</dbReference>
<dbReference type="FunFam" id="2.30.29.30:FF:000264">
    <property type="entry name" value="Potential exocyst complex component Exo84"/>
    <property type="match status" value="1"/>
</dbReference>
<dbReference type="Gene3D" id="1.20.58.1210">
    <property type="entry name" value="Exo84p, N-terminal helical domain"/>
    <property type="match status" value="1"/>
</dbReference>
<dbReference type="Gene3D" id="2.30.29.30">
    <property type="entry name" value="Pleckstrin-homology domain (PH domain)/Phosphotyrosine-binding domain (PTB)"/>
    <property type="match status" value="1"/>
</dbReference>
<dbReference type="InterPro" id="IPR016159">
    <property type="entry name" value="Cullin_repeat-like_dom_sf"/>
</dbReference>
<dbReference type="InterPro" id="IPR033961">
    <property type="entry name" value="Exo84"/>
</dbReference>
<dbReference type="InterPro" id="IPR032403">
    <property type="entry name" value="Exo84_C"/>
</dbReference>
<dbReference type="InterPro" id="IPR042561">
    <property type="entry name" value="Exo84_C_1"/>
</dbReference>
<dbReference type="InterPro" id="IPR011993">
    <property type="entry name" value="PH-like_dom_sf"/>
</dbReference>
<dbReference type="PANTHER" id="PTHR21426">
    <property type="entry name" value="EXOCYST COMPLEX COMPONENT 8"/>
    <property type="match status" value="1"/>
</dbReference>
<dbReference type="PANTHER" id="PTHR21426:SF12">
    <property type="entry name" value="EXOCYST COMPLEX COMPONENT 8"/>
    <property type="match status" value="1"/>
</dbReference>
<dbReference type="Pfam" id="PF16528">
    <property type="entry name" value="Exo84_C"/>
    <property type="match status" value="1"/>
</dbReference>
<dbReference type="Pfam" id="PF25345">
    <property type="entry name" value="PH_EXO84"/>
    <property type="match status" value="1"/>
</dbReference>
<dbReference type="Pfam" id="PF08700">
    <property type="entry name" value="VPS51_Exo84_N"/>
    <property type="match status" value="1"/>
</dbReference>
<dbReference type="SUPFAM" id="SSF74788">
    <property type="entry name" value="Cullin repeat-like"/>
    <property type="match status" value="1"/>
</dbReference>
<accession>Q5BFX0</accession>
<accession>C8VSK6</accession>
<name>EXO84_EMENI</name>
<protein>
    <recommendedName>
        <fullName>Exocyst complex component exo84</fullName>
    </recommendedName>
</protein>
<gene>
    <name type="primary">exo84</name>
    <name type="ORF">AN0560</name>
</gene>
<proteinExistence type="inferred from homology"/>
<keyword id="KW-0175">Coiled coil</keyword>
<keyword id="KW-0968">Cytoplasmic vesicle</keyword>
<keyword id="KW-0268">Exocytosis</keyword>
<keyword id="KW-0653">Protein transport</keyword>
<keyword id="KW-1185">Reference proteome</keyword>
<keyword id="KW-0813">Transport</keyword>
<sequence>MDGRGLTLRSKNRRPRPQISAPKPISGPLPQNHQPAASGSGTASSGSGSRDYASSNHATSDLVKRRYSTRFNQVPDFDGAPPVPSVPQVPSAYAGLGPPQPSRKQSAESSGPPEVDLTALRDPSLPVDRYVTNLLANASEDDIREYQQALRKVKNRTSTDLQQNVYQNRTQFIRISQEADKLKGEMKTLRSLMAELTTALGQTAIGDSPNPMSPTLDERASKRSNRSSVANLESMWNVQLQTLWKTVEGSQKFLPMVPGRHIVLETGNWAELDSATWKPRRPVHLVLLNDHLLVAAKKRKRVDQSNPNHRGPVPTKLIAEECWPLQDIDMIDLGANLTGSAREEAEDRGITNAVCVRVGSKPFTYRHDKRNSTAKSELLATFRKTVEDLRRTLRSETEAAGKNGESLGFMSAINSRNSLLCSPKLDLSENTDNPRDRPEVRIDVDGKQQNLRWVDSQVDELDIDIALQRFEEAVSNIDRLRKLARGLKGNAVAQDVINTKVDERAAKLAGILSRSLVDTHGFPVATKTNVVWLTRLGFEDQARESYLKARSDVISKRIRTYQQCFPSVMTSACIKWAKHHLDAFNALLTRQLSSVQRGATVWQNCINIVHEQAGILAEVGVDFTDLVAKELELTEEEKAARPEMTRSESLIMGLADAASFFNMYGH</sequence>